<reference key="1">
    <citation type="journal article" date="1996" name="Science">
        <title>Complete genome sequence of the methanogenic archaeon, Methanococcus jannaschii.</title>
        <authorList>
            <person name="Bult C.J."/>
            <person name="White O."/>
            <person name="Olsen G.J."/>
            <person name="Zhou L."/>
            <person name="Fleischmann R.D."/>
            <person name="Sutton G.G."/>
            <person name="Blake J.A."/>
            <person name="FitzGerald L.M."/>
            <person name="Clayton R.A."/>
            <person name="Gocayne J.D."/>
            <person name="Kerlavage A.R."/>
            <person name="Dougherty B.A."/>
            <person name="Tomb J.-F."/>
            <person name="Adams M.D."/>
            <person name="Reich C.I."/>
            <person name="Overbeek R."/>
            <person name="Kirkness E.F."/>
            <person name="Weinstock K.G."/>
            <person name="Merrick J.M."/>
            <person name="Glodek A."/>
            <person name="Scott J.L."/>
            <person name="Geoghagen N.S.M."/>
            <person name="Weidman J.F."/>
            <person name="Fuhrmann J.L."/>
            <person name="Nguyen D."/>
            <person name="Utterback T.R."/>
            <person name="Kelley J.M."/>
            <person name="Peterson J.D."/>
            <person name="Sadow P.W."/>
            <person name="Hanna M.C."/>
            <person name="Cotton M.D."/>
            <person name="Roberts K.M."/>
            <person name="Hurst M.A."/>
            <person name="Kaine B.P."/>
            <person name="Borodovsky M."/>
            <person name="Klenk H.-P."/>
            <person name="Fraser C.M."/>
            <person name="Smith H.O."/>
            <person name="Woese C.R."/>
            <person name="Venter J.C."/>
        </authorList>
    </citation>
    <scope>NUCLEOTIDE SEQUENCE [LARGE SCALE GENOMIC DNA]</scope>
    <source>
        <strain>ATCC 43067 / DSM 2661 / JAL-1 / JCM 10045 / NBRC 100440</strain>
    </source>
</reference>
<keyword id="KW-0002">3D-structure</keyword>
<keyword id="KW-0974">Archaeal flagellum</keyword>
<keyword id="KW-0067">ATP-binding</keyword>
<keyword id="KW-0460">Magnesium</keyword>
<keyword id="KW-0479">Metal-binding</keyword>
<keyword id="KW-0547">Nucleotide-binding</keyword>
<keyword id="KW-1185">Reference proteome</keyword>
<accession>Q58309</accession>
<gene>
    <name type="primary">flaH</name>
    <name type="ordered locus">MJ0899</name>
</gene>
<name>FLAH_METJA</name>
<evidence type="ECO:0000250" key="1">
    <source>
        <dbReference type="UniProtKB" id="Q4J9K9"/>
    </source>
</evidence>
<evidence type="ECO:0000305" key="2"/>
<evidence type="ECO:0007829" key="3">
    <source>
        <dbReference type="PDB" id="4WIA"/>
    </source>
</evidence>
<comment type="function">
    <text evidence="1">Component of the archaellum.</text>
</comment>
<comment type="subcellular location">
    <subcellularLocation>
        <location evidence="1">Archaeal flagellum</location>
    </subcellularLocation>
</comment>
<comment type="similarity">
    <text evidence="2">Belongs to the FlaH family.</text>
</comment>
<dbReference type="EMBL" id="L77117">
    <property type="protein sequence ID" value="AAB98902.1"/>
    <property type="molecule type" value="Genomic_DNA"/>
</dbReference>
<dbReference type="PIR" id="C64412">
    <property type="entry name" value="C64412"/>
</dbReference>
<dbReference type="PDB" id="4WIA">
    <property type="method" value="X-ray"/>
    <property type="resolution" value="2.20 A"/>
    <property type="chains" value="A/B/C=1-233"/>
</dbReference>
<dbReference type="PDBsum" id="4WIA"/>
<dbReference type="SMR" id="Q58309"/>
<dbReference type="FunCoup" id="Q58309">
    <property type="interactions" value="3"/>
</dbReference>
<dbReference type="STRING" id="243232.MJ_0899"/>
<dbReference type="PaxDb" id="243232-MJ_0899"/>
<dbReference type="EnsemblBacteria" id="AAB98902">
    <property type="protein sequence ID" value="AAB98902"/>
    <property type="gene ID" value="MJ_0899"/>
</dbReference>
<dbReference type="KEGG" id="mja:MJ_0899"/>
<dbReference type="eggNOG" id="arCOG04148">
    <property type="taxonomic scope" value="Archaea"/>
</dbReference>
<dbReference type="HOGENOM" id="CLU_094838_0_0_2"/>
<dbReference type="InParanoid" id="Q58309"/>
<dbReference type="PhylomeDB" id="Q58309"/>
<dbReference type="BRENDA" id="3.6.4.B6">
    <property type="organism ID" value="3260"/>
</dbReference>
<dbReference type="Proteomes" id="UP000000805">
    <property type="component" value="Chromosome"/>
</dbReference>
<dbReference type="GO" id="GO:0097589">
    <property type="term" value="C:archaeal-type flagellum"/>
    <property type="evidence" value="ECO:0007669"/>
    <property type="project" value="UniProtKB-SubCell"/>
</dbReference>
<dbReference type="GO" id="GO:0005524">
    <property type="term" value="F:ATP binding"/>
    <property type="evidence" value="ECO:0007669"/>
    <property type="project" value="UniProtKB-KW"/>
</dbReference>
<dbReference type="GO" id="GO:0016887">
    <property type="term" value="F:ATP hydrolysis activity"/>
    <property type="evidence" value="ECO:0007669"/>
    <property type="project" value="InterPro"/>
</dbReference>
<dbReference type="GO" id="GO:0046872">
    <property type="term" value="F:metal ion binding"/>
    <property type="evidence" value="ECO:0007669"/>
    <property type="project" value="UniProtKB-KW"/>
</dbReference>
<dbReference type="CDD" id="cd19475">
    <property type="entry name" value="FlaH"/>
    <property type="match status" value="1"/>
</dbReference>
<dbReference type="Gene3D" id="3.40.50.300">
    <property type="entry name" value="P-loop containing nucleotide triphosphate hydrolases"/>
    <property type="match status" value="1"/>
</dbReference>
<dbReference type="InterPro" id="IPR003593">
    <property type="entry name" value="AAA+_ATPase"/>
</dbReference>
<dbReference type="InterPro" id="IPR056568">
    <property type="entry name" value="ArlH"/>
</dbReference>
<dbReference type="InterPro" id="IPR014774">
    <property type="entry name" value="KaiC-like_dom"/>
</dbReference>
<dbReference type="InterPro" id="IPR027417">
    <property type="entry name" value="P-loop_NTPase"/>
</dbReference>
<dbReference type="NCBIfam" id="NF006320">
    <property type="entry name" value="PRK08533.1"/>
    <property type="match status" value="1"/>
</dbReference>
<dbReference type="PANTHER" id="PTHR43637:SF3">
    <property type="entry name" value="FLAGELLA-RELATED PROTEIN H-RELATED"/>
    <property type="match status" value="1"/>
</dbReference>
<dbReference type="PANTHER" id="PTHR43637">
    <property type="entry name" value="UPF0273 PROTEIN TM_0370"/>
    <property type="match status" value="1"/>
</dbReference>
<dbReference type="Pfam" id="PF06745">
    <property type="entry name" value="ATPase"/>
    <property type="match status" value="1"/>
</dbReference>
<dbReference type="SMART" id="SM00382">
    <property type="entry name" value="AAA"/>
    <property type="match status" value="1"/>
</dbReference>
<dbReference type="SUPFAM" id="SSF52540">
    <property type="entry name" value="P-loop containing nucleoside triphosphate hydrolases"/>
    <property type="match status" value="1"/>
</dbReference>
<feature type="chain" id="PRO_0000087278" description="Archaeal flagellar ATP-binding protein FlaH">
    <location>
        <begin position="1"/>
        <end position="233"/>
    </location>
</feature>
<feature type="binding site" evidence="1">
    <location>
        <position position="38"/>
    </location>
    <ligand>
        <name>ATP</name>
        <dbReference type="ChEBI" id="CHEBI:30616"/>
    </ligand>
</feature>
<feature type="binding site" evidence="1">
    <location>
        <position position="40"/>
    </location>
    <ligand>
        <name>ATP</name>
        <dbReference type="ChEBI" id="CHEBI:30616"/>
    </ligand>
</feature>
<feature type="binding site" evidence="1">
    <location>
        <position position="41"/>
    </location>
    <ligand>
        <name>ATP</name>
        <dbReference type="ChEBI" id="CHEBI:30616"/>
    </ligand>
</feature>
<feature type="binding site" evidence="1">
    <location>
        <position position="41"/>
    </location>
    <ligand>
        <name>Mg(2+)</name>
        <dbReference type="ChEBI" id="CHEBI:18420"/>
    </ligand>
</feature>
<feature type="binding site" evidence="1">
    <location>
        <position position="42"/>
    </location>
    <ligand>
        <name>ATP</name>
        <dbReference type="ChEBI" id="CHEBI:30616"/>
    </ligand>
</feature>
<feature type="binding site" evidence="1">
    <location>
        <position position="64"/>
    </location>
    <ligand>
        <name>ATP</name>
        <dbReference type="ChEBI" id="CHEBI:30616"/>
    </ligand>
</feature>
<feature type="binding site" evidence="1">
    <location>
        <position position="196"/>
    </location>
    <ligand>
        <name>ATP</name>
        <dbReference type="ChEBI" id="CHEBI:30616"/>
    </ligand>
</feature>
<feature type="helix" evidence="3">
    <location>
        <begin position="16"/>
        <end position="19"/>
    </location>
</feature>
<feature type="strand" evidence="3">
    <location>
        <begin position="22"/>
        <end position="25"/>
    </location>
</feature>
<feature type="strand" evidence="3">
    <location>
        <begin position="29"/>
        <end position="33"/>
    </location>
</feature>
<feature type="helix" evidence="3">
    <location>
        <begin position="40"/>
        <end position="53"/>
    </location>
</feature>
<feature type="strand" evidence="3">
    <location>
        <begin position="58"/>
        <end position="64"/>
    </location>
</feature>
<feature type="helix" evidence="3">
    <location>
        <begin position="67"/>
        <end position="76"/>
    </location>
</feature>
<feature type="helix" evidence="3">
    <location>
        <begin position="82"/>
        <end position="86"/>
    </location>
</feature>
<feature type="strand" evidence="3">
    <location>
        <begin position="89"/>
        <end position="94"/>
    </location>
</feature>
<feature type="helix" evidence="3">
    <location>
        <begin position="96"/>
        <end position="100"/>
    </location>
</feature>
<feature type="helix" evidence="3">
    <location>
        <begin position="108"/>
        <end position="114"/>
    </location>
</feature>
<feature type="helix" evidence="3">
    <location>
        <begin position="116"/>
        <end position="119"/>
    </location>
</feature>
<feature type="strand" evidence="3">
    <location>
        <begin position="121"/>
        <end position="127"/>
    </location>
</feature>
<feature type="helix" evidence="3">
    <location>
        <begin position="129"/>
        <end position="134"/>
    </location>
</feature>
<feature type="helix" evidence="3">
    <location>
        <begin position="142"/>
        <end position="153"/>
    </location>
</feature>
<feature type="turn" evidence="3">
    <location>
        <begin position="154"/>
        <end position="156"/>
    </location>
</feature>
<feature type="strand" evidence="3">
    <location>
        <begin position="158"/>
        <end position="163"/>
    </location>
</feature>
<feature type="helix" evidence="3">
    <location>
        <begin position="165"/>
        <end position="167"/>
    </location>
</feature>
<feature type="helix" evidence="3">
    <location>
        <begin position="170"/>
        <end position="179"/>
    </location>
</feature>
<feature type="strand" evidence="3">
    <location>
        <begin position="181"/>
        <end position="191"/>
    </location>
</feature>
<feature type="strand" evidence="3">
    <location>
        <begin position="194"/>
        <end position="204"/>
    </location>
</feature>
<feature type="strand" evidence="3">
    <location>
        <begin position="213"/>
        <end position="220"/>
    </location>
</feature>
<feature type="turn" evidence="3">
    <location>
        <begin position="221"/>
        <end position="223"/>
    </location>
</feature>
<feature type="strand" evidence="3">
    <location>
        <begin position="224"/>
        <end position="227"/>
    </location>
</feature>
<proteinExistence type="evidence at protein level"/>
<sequence>MGIMELARIDLSRDDLDKRIGGGIPHGSLIIIEGEESTGKSVLCQRLAYGFLQNRYSVTYVSTQLTTLEFIKQMNSLNYSINKKLLSGALLYIPVYPLIADNKKKDGFLKKVMETRAFYEKDVIIFDSISALIANDASEVNVDDLMAFFKRITALKKIIICTVNPKELPESVLTIIRTSATMLIRTELFTFGGDLKNLAKILKYNMAPGSYQKNIVFRVEPKIGIAVEIASVA</sequence>
<protein>
    <recommendedName>
        <fullName evidence="1">Archaeal flagellar ATP-binding protein FlaH</fullName>
    </recommendedName>
</protein>
<organism>
    <name type="scientific">Methanocaldococcus jannaschii (strain ATCC 43067 / DSM 2661 / JAL-1 / JCM 10045 / NBRC 100440)</name>
    <name type="common">Methanococcus jannaschii</name>
    <dbReference type="NCBI Taxonomy" id="243232"/>
    <lineage>
        <taxon>Archaea</taxon>
        <taxon>Methanobacteriati</taxon>
        <taxon>Methanobacteriota</taxon>
        <taxon>Methanomada group</taxon>
        <taxon>Methanococci</taxon>
        <taxon>Methanococcales</taxon>
        <taxon>Methanocaldococcaceae</taxon>
        <taxon>Methanocaldococcus</taxon>
    </lineage>
</organism>